<keyword id="KW-0687">Ribonucleoprotein</keyword>
<keyword id="KW-0689">Ribosomal protein</keyword>
<keyword id="KW-0694">RNA-binding</keyword>
<keyword id="KW-0699">rRNA-binding</keyword>
<evidence type="ECO:0000255" key="1">
    <source>
        <dbReference type="HAMAP-Rule" id="MF_00362"/>
    </source>
</evidence>
<evidence type="ECO:0000305" key="2"/>
<dbReference type="EMBL" id="CP000075">
    <property type="protein sequence ID" value="AAY39587.1"/>
    <property type="molecule type" value="Genomic_DNA"/>
</dbReference>
<dbReference type="RefSeq" id="WP_002555498.1">
    <property type="nucleotide sequence ID" value="NC_007005.1"/>
</dbReference>
<dbReference type="RefSeq" id="YP_237625.1">
    <property type="nucleotide sequence ID" value="NC_007005.1"/>
</dbReference>
<dbReference type="STRING" id="205918.Psyr_4557"/>
<dbReference type="GeneID" id="77280383"/>
<dbReference type="KEGG" id="psb:Psyr_4557"/>
<dbReference type="PATRIC" id="fig|205918.7.peg.4696"/>
<dbReference type="eggNOG" id="COG0244">
    <property type="taxonomic scope" value="Bacteria"/>
</dbReference>
<dbReference type="HOGENOM" id="CLU_092227_0_2_6"/>
<dbReference type="OrthoDB" id="9808307at2"/>
<dbReference type="Proteomes" id="UP000000426">
    <property type="component" value="Chromosome"/>
</dbReference>
<dbReference type="GO" id="GO:0015934">
    <property type="term" value="C:large ribosomal subunit"/>
    <property type="evidence" value="ECO:0007669"/>
    <property type="project" value="InterPro"/>
</dbReference>
<dbReference type="GO" id="GO:0070180">
    <property type="term" value="F:large ribosomal subunit rRNA binding"/>
    <property type="evidence" value="ECO:0007669"/>
    <property type="project" value="UniProtKB-UniRule"/>
</dbReference>
<dbReference type="GO" id="GO:0003735">
    <property type="term" value="F:structural constituent of ribosome"/>
    <property type="evidence" value="ECO:0007669"/>
    <property type="project" value="InterPro"/>
</dbReference>
<dbReference type="GO" id="GO:0006412">
    <property type="term" value="P:translation"/>
    <property type="evidence" value="ECO:0007669"/>
    <property type="project" value="UniProtKB-UniRule"/>
</dbReference>
<dbReference type="CDD" id="cd05797">
    <property type="entry name" value="Ribosomal_L10"/>
    <property type="match status" value="1"/>
</dbReference>
<dbReference type="FunFam" id="3.30.70.1730:FF:000001">
    <property type="entry name" value="50S ribosomal protein L10"/>
    <property type="match status" value="1"/>
</dbReference>
<dbReference type="Gene3D" id="3.30.70.1730">
    <property type="match status" value="1"/>
</dbReference>
<dbReference type="Gene3D" id="6.10.250.2350">
    <property type="match status" value="1"/>
</dbReference>
<dbReference type="HAMAP" id="MF_00362">
    <property type="entry name" value="Ribosomal_uL10"/>
    <property type="match status" value="1"/>
</dbReference>
<dbReference type="InterPro" id="IPR001790">
    <property type="entry name" value="Ribosomal_uL10"/>
</dbReference>
<dbReference type="InterPro" id="IPR043141">
    <property type="entry name" value="Ribosomal_uL10-like_sf"/>
</dbReference>
<dbReference type="InterPro" id="IPR022973">
    <property type="entry name" value="Ribosomal_uL10_bac"/>
</dbReference>
<dbReference type="InterPro" id="IPR047865">
    <property type="entry name" value="Ribosomal_uL10_bac_type"/>
</dbReference>
<dbReference type="InterPro" id="IPR002363">
    <property type="entry name" value="Ribosomal_uL10_CS_bac"/>
</dbReference>
<dbReference type="NCBIfam" id="NF000955">
    <property type="entry name" value="PRK00099.1-1"/>
    <property type="match status" value="1"/>
</dbReference>
<dbReference type="PANTHER" id="PTHR11560">
    <property type="entry name" value="39S RIBOSOMAL PROTEIN L10, MITOCHONDRIAL"/>
    <property type="match status" value="1"/>
</dbReference>
<dbReference type="Pfam" id="PF00466">
    <property type="entry name" value="Ribosomal_L10"/>
    <property type="match status" value="1"/>
</dbReference>
<dbReference type="SUPFAM" id="SSF160369">
    <property type="entry name" value="Ribosomal protein L10-like"/>
    <property type="match status" value="1"/>
</dbReference>
<dbReference type="PROSITE" id="PS01109">
    <property type="entry name" value="RIBOSOMAL_L10"/>
    <property type="match status" value="1"/>
</dbReference>
<comment type="function">
    <text evidence="1">Forms part of the ribosomal stalk, playing a central role in the interaction of the ribosome with GTP-bound translation factors.</text>
</comment>
<comment type="subunit">
    <text evidence="1">Part of the ribosomal stalk of the 50S ribosomal subunit. The N-terminus interacts with L11 and the large rRNA to form the base of the stalk. The C-terminus forms an elongated spine to which L12 dimers bind in a sequential fashion forming a multimeric L10(L12)X complex.</text>
</comment>
<comment type="similarity">
    <text evidence="1">Belongs to the universal ribosomal protein uL10 family.</text>
</comment>
<sequence length="166" mass="17558">MAIKLEDKKAIVAEVNEAAKAGLSAVVADARGVTVGAMTGLRKEAREAGVYVRVVRNTLLKRAVADTEFSVLNDVFTGPTLIAFSNEHPGAAARLFKEFAKGQDKFEIKAAAFEGKFLAANQIDVLASLPTRNEAISQLMSVIQGATSKLARTLAAVRDQKEAAAA</sequence>
<accession>Q4ZMN5</accession>
<gene>
    <name evidence="1" type="primary">rplJ</name>
    <name type="ordered locus">Psyr_4557</name>
</gene>
<feature type="chain" id="PRO_0000234876" description="Large ribosomal subunit protein uL10">
    <location>
        <begin position="1"/>
        <end position="166"/>
    </location>
</feature>
<name>RL10_PSEU2</name>
<proteinExistence type="inferred from homology"/>
<protein>
    <recommendedName>
        <fullName evidence="1">Large ribosomal subunit protein uL10</fullName>
    </recommendedName>
    <alternativeName>
        <fullName evidence="2">50S ribosomal protein L10</fullName>
    </alternativeName>
</protein>
<organism>
    <name type="scientific">Pseudomonas syringae pv. syringae (strain B728a)</name>
    <dbReference type="NCBI Taxonomy" id="205918"/>
    <lineage>
        <taxon>Bacteria</taxon>
        <taxon>Pseudomonadati</taxon>
        <taxon>Pseudomonadota</taxon>
        <taxon>Gammaproteobacteria</taxon>
        <taxon>Pseudomonadales</taxon>
        <taxon>Pseudomonadaceae</taxon>
        <taxon>Pseudomonas</taxon>
        <taxon>Pseudomonas syringae</taxon>
    </lineage>
</organism>
<reference key="1">
    <citation type="journal article" date="2005" name="Proc. Natl. Acad. Sci. U.S.A.">
        <title>Comparison of the complete genome sequences of Pseudomonas syringae pv. syringae B728a and pv. tomato DC3000.</title>
        <authorList>
            <person name="Feil H."/>
            <person name="Feil W.S."/>
            <person name="Chain P."/>
            <person name="Larimer F."/>
            <person name="Dibartolo G."/>
            <person name="Copeland A."/>
            <person name="Lykidis A."/>
            <person name="Trong S."/>
            <person name="Nolan M."/>
            <person name="Goltsman E."/>
            <person name="Thiel J."/>
            <person name="Malfatti S."/>
            <person name="Loper J.E."/>
            <person name="Lapidus A."/>
            <person name="Detter J.C."/>
            <person name="Land M."/>
            <person name="Richardson P.M."/>
            <person name="Kyrpides N.C."/>
            <person name="Ivanova N."/>
            <person name="Lindow S.E."/>
        </authorList>
    </citation>
    <scope>NUCLEOTIDE SEQUENCE [LARGE SCALE GENOMIC DNA]</scope>
    <source>
        <strain>B728a</strain>
    </source>
</reference>